<name>NPD_ECOLI</name>
<gene>
    <name evidence="2" type="primary">cobB</name>
    <name type="synonym">ycfY</name>
    <name evidence="13" type="ordered locus">b1120</name>
    <name type="ordered locus">JW1106</name>
</gene>
<comment type="function">
    <text evidence="2 5 6 7 8 9">NAD-dependent lysine deacetylase that specifically removes acetyl groups on target proteins. Also acts as a protein-lysine deacylase by mediating protein desuccinylation and de-2-hydroxyisobutyrylation. Modulates the activities of several proteins which are inactive in their acylated form. Activates the enzyme acetyl-CoA synthetase (acs) by deacetylating 'Lys-609' in the inactive, acetylated form of the enzyme. May also modulate the activity of other propionyl-adenosine monophosphate (AMP)-forming enzymes.</text>
</comment>
<comment type="catalytic activity">
    <reaction evidence="2 12">
        <text>N(6)-acetyl-L-lysyl-[protein] + NAD(+) + H2O = 2''-O-acetyl-ADP-D-ribose + nicotinamide + L-lysyl-[protein]</text>
        <dbReference type="Rhea" id="RHEA:43636"/>
        <dbReference type="Rhea" id="RHEA-COMP:9752"/>
        <dbReference type="Rhea" id="RHEA-COMP:10731"/>
        <dbReference type="ChEBI" id="CHEBI:15377"/>
        <dbReference type="ChEBI" id="CHEBI:17154"/>
        <dbReference type="ChEBI" id="CHEBI:29969"/>
        <dbReference type="ChEBI" id="CHEBI:57540"/>
        <dbReference type="ChEBI" id="CHEBI:61930"/>
        <dbReference type="ChEBI" id="CHEBI:83767"/>
        <dbReference type="EC" id="2.3.1.286"/>
    </reaction>
</comment>
<comment type="catalytic activity">
    <reaction evidence="2">
        <text>N(6)-succinyl-L-lysyl-[protein] + NAD(+) + H2O = 2''-O-succinyl-ADP-D-ribose + nicotinamide + L-lysyl-[protein]</text>
        <dbReference type="Rhea" id="RHEA:47668"/>
        <dbReference type="Rhea" id="RHEA-COMP:9752"/>
        <dbReference type="Rhea" id="RHEA-COMP:11877"/>
        <dbReference type="ChEBI" id="CHEBI:15377"/>
        <dbReference type="ChEBI" id="CHEBI:17154"/>
        <dbReference type="ChEBI" id="CHEBI:29969"/>
        <dbReference type="ChEBI" id="CHEBI:57540"/>
        <dbReference type="ChEBI" id="CHEBI:87830"/>
        <dbReference type="ChEBI" id="CHEBI:87832"/>
    </reaction>
</comment>
<comment type="catalytic activity">
    <reaction evidence="1 2">
        <text>N(6)-(2-hydroxyisobutanoyl)-L-lysyl-[protein] + NAD(+) + H2O = 2''-O-(2-hydroxyisobutanoyl)-ADP-D-ribose + nicotinamide + L-lysyl-[protein]</text>
        <dbReference type="Rhea" id="RHEA:24364"/>
        <dbReference type="Rhea" id="RHEA-COMP:9752"/>
        <dbReference type="Rhea" id="RHEA-COMP:15921"/>
        <dbReference type="ChEBI" id="CHEBI:15377"/>
        <dbReference type="ChEBI" id="CHEBI:17154"/>
        <dbReference type="ChEBI" id="CHEBI:29969"/>
        <dbReference type="ChEBI" id="CHEBI:57540"/>
        <dbReference type="ChEBI" id="CHEBI:144968"/>
        <dbReference type="ChEBI" id="CHEBI:144969"/>
    </reaction>
</comment>
<comment type="cofactor">
    <cofactor evidence="2 6">
        <name>Zn(2+)</name>
        <dbReference type="ChEBI" id="CHEBI:29105"/>
    </cofactor>
    <text evidence="2 6">Binds 1 zinc ion per subunit.</text>
</comment>
<comment type="activity regulation">
    <text evidence="8">Deacetylation is inhibited by nicotinamide.</text>
</comment>
<comment type="biophysicochemical properties">
    <kinetics>
        <KM evidence="7">15.1 uM for a synthetic histone H3K9 acetyllysine peptide</KM>
        <KM evidence="7">86 uM for a synthetic histone H3K9 succinyllysine peptide</KM>
        <text>kcat is 0.135 sec(-1) for acetyllysine peptide. kcat is 0.242 sec(-1) for succinyllysine peptide.</text>
    </kinetics>
</comment>
<comment type="subunit">
    <text evidence="6">Forms a 1:1 complex with acetyl-CoA synthetase (Acs).</text>
</comment>
<comment type="interaction">
    <interactant intactId="EBI-544459">
        <id>P75960</id>
    </interactant>
    <interactant intactId="EBI-544452">
        <id>P75869</id>
        <label>sxy</label>
    </interactant>
    <organismsDiffer>false</organismsDiffer>
    <experiments>9</experiments>
</comment>
<comment type="interaction">
    <interactant intactId="EBI-544459">
        <id>P75960</id>
    </interactant>
    <interactant intactId="EBI-544796">
        <id>P77376</id>
        <label>ydgJ</label>
    </interactant>
    <organismsDiffer>false</organismsDiffer>
    <experiments>2</experiments>
</comment>
<comment type="subcellular location">
    <subcellularLocation>
        <location evidence="2">Cytoplasm</location>
    </subcellularLocation>
</comment>
<comment type="alternative products">
    <event type="alternative promoter"/>
    <isoform>
        <id>P75960-1</id>
        <name evidence="12">CobB-Long</name>
        <sequence type="displayed"/>
    </isoform>
    <isoform>
        <id>P75960-2</id>
        <name evidence="12">CobB-Short</name>
        <sequence type="described" ref="VSP_058458"/>
    </isoform>
</comment>
<comment type="domain">
    <text evidence="2 7">2 residues (Tyr-92 and Arg-95) present in a large hydrophobic pocket are probably involved in substrate specificity. They are important for desuccinylation activity, but dispensable for deacetylation activity.</text>
</comment>
<comment type="disruption phenotype">
    <text evidence="8">Decreased deacetylation of alanine--tRNA ligase (alaS).</text>
</comment>
<comment type="similarity">
    <text evidence="2">Belongs to the sirtuin family. Class III subfamily.</text>
</comment>
<comment type="caution">
    <text evidence="10">Was originally thought to be involved in cobalamin biosynthesis.</text>
</comment>
<comment type="caution">
    <text evidence="11">In contrast to human SIRT5, which has only weak deacetylation activity, CobB shows comparable lysine deacetylation and lysine deacylation activities.</text>
</comment>
<comment type="caution">
    <text evidence="4 10">PubMed:10381378 has reported that this protein has a weak ADP-ribosyltransferase activity, but that is probably not its primary activity in vivo.</text>
</comment>
<accession>P75960</accession>
<accession>A0A7H2C766</accession>
<evidence type="ECO:0000250" key="1">
    <source>
        <dbReference type="UniProtKB" id="B4EVF5"/>
    </source>
</evidence>
<evidence type="ECO:0000255" key="2">
    <source>
        <dbReference type="HAMAP-Rule" id="MF_01121"/>
    </source>
</evidence>
<evidence type="ECO:0000255" key="3">
    <source>
        <dbReference type="PROSITE-ProRule" id="PRU00236"/>
    </source>
</evidence>
<evidence type="ECO:0000269" key="4">
    <source>
    </source>
</evidence>
<evidence type="ECO:0000269" key="5">
    <source>
    </source>
</evidence>
<evidence type="ECO:0000269" key="6">
    <source>
    </source>
</evidence>
<evidence type="ECO:0000269" key="7">
    <source>
    </source>
</evidence>
<evidence type="ECO:0000269" key="8">
    <source>
    </source>
</evidence>
<evidence type="ECO:0000269" key="9">
    <source>
    </source>
</evidence>
<evidence type="ECO:0000305" key="10"/>
<evidence type="ECO:0000305" key="11">
    <source>
    </source>
</evidence>
<evidence type="ECO:0000305" key="12">
    <source>
    </source>
</evidence>
<evidence type="ECO:0000312" key="13">
    <source>
        <dbReference type="EMBL" id="AAC74204.3"/>
    </source>
</evidence>
<evidence type="ECO:0007744" key="14">
    <source>
        <dbReference type="PDB" id="1S5P"/>
    </source>
</evidence>
<evidence type="ECO:0007829" key="15">
    <source>
        <dbReference type="PDB" id="6RXK"/>
    </source>
</evidence>
<reference key="1">
    <citation type="journal article" date="1996" name="DNA Res.">
        <title>A 718-kb DNA sequence of the Escherichia coli K-12 genome corresponding to the 12.7-28.0 min region on the linkage map.</title>
        <authorList>
            <person name="Oshima T."/>
            <person name="Aiba H."/>
            <person name="Baba T."/>
            <person name="Fujita K."/>
            <person name="Hayashi K."/>
            <person name="Honjo A."/>
            <person name="Ikemoto K."/>
            <person name="Inada T."/>
            <person name="Itoh T."/>
            <person name="Kajihara M."/>
            <person name="Kanai K."/>
            <person name="Kashimoto K."/>
            <person name="Kimura S."/>
            <person name="Kitagawa M."/>
            <person name="Makino K."/>
            <person name="Masuda S."/>
            <person name="Miki T."/>
            <person name="Mizobuchi K."/>
            <person name="Mori H."/>
            <person name="Motomura K."/>
            <person name="Nakamura Y."/>
            <person name="Nashimoto H."/>
            <person name="Nishio Y."/>
            <person name="Saito N."/>
            <person name="Sampei G."/>
            <person name="Seki Y."/>
            <person name="Tagami H."/>
            <person name="Takemoto K."/>
            <person name="Wada C."/>
            <person name="Yamamoto Y."/>
            <person name="Yano M."/>
            <person name="Horiuchi T."/>
        </authorList>
    </citation>
    <scope>NUCLEOTIDE SEQUENCE [LARGE SCALE GENOMIC DNA]</scope>
    <source>
        <strain>K12 / W3110 / ATCC 27325 / DSM 5911</strain>
    </source>
</reference>
<reference key="2">
    <citation type="journal article" date="1997" name="Science">
        <title>The complete genome sequence of Escherichia coli K-12.</title>
        <authorList>
            <person name="Blattner F.R."/>
            <person name="Plunkett G. III"/>
            <person name="Bloch C.A."/>
            <person name="Perna N.T."/>
            <person name="Burland V."/>
            <person name="Riley M."/>
            <person name="Collado-Vides J."/>
            <person name="Glasner J.D."/>
            <person name="Rode C.K."/>
            <person name="Mayhew G.F."/>
            <person name="Gregor J."/>
            <person name="Davis N.W."/>
            <person name="Kirkpatrick H.A."/>
            <person name="Goeden M.A."/>
            <person name="Rose D.J."/>
            <person name="Mau B."/>
            <person name="Shao Y."/>
        </authorList>
    </citation>
    <scope>NUCLEOTIDE SEQUENCE [LARGE SCALE GENOMIC DNA]</scope>
    <source>
        <strain>K12 / MG1655 / ATCC 47076</strain>
    </source>
</reference>
<reference key="3">
    <citation type="journal article" date="2006" name="Mol. Syst. Biol.">
        <title>Highly accurate genome sequences of Escherichia coli K-12 strains MG1655 and W3110.</title>
        <authorList>
            <person name="Hayashi K."/>
            <person name="Morooka N."/>
            <person name="Yamamoto Y."/>
            <person name="Fujita K."/>
            <person name="Isono K."/>
            <person name="Choi S."/>
            <person name="Ohtsubo E."/>
            <person name="Baba T."/>
            <person name="Wanner B.L."/>
            <person name="Mori H."/>
            <person name="Horiuchi T."/>
        </authorList>
    </citation>
    <scope>NUCLEOTIDE SEQUENCE [LARGE SCALE GENOMIC DNA]</scope>
    <source>
        <strain>K12 / W3110 / ATCC 27325 / DSM 5911</strain>
    </source>
</reference>
<reference key="4">
    <citation type="journal article" date="1999" name="Biochem. Biophys. Res. Commun.">
        <title>Characterization of five human cDNAs with homology to the yeast SIR2 gene: Sir2-like proteins (sirtuins) metabolize NAD and may have protein ADP-ribosyltransferase activity.</title>
        <authorList>
            <person name="Frye R.A."/>
        </authorList>
    </citation>
    <scope>WEAK ADP-RIBOSYLTRANSFERASE ACTIVITY</scope>
    <source>
        <strain>K12 / MG1655 / ATCC 47076</strain>
    </source>
</reference>
<reference key="5">
    <citation type="journal article" date="2000" name="Proc. Natl. Acad. Sci. U.S.A.">
        <title>The silencing protein SIR2 and its homologs are NAD-dependent protein deacetylases.</title>
        <authorList>
            <person name="Landry J."/>
            <person name="Sutton A."/>
            <person name="Tafrov S.T."/>
            <person name="Heller R.C."/>
            <person name="Stebbins J."/>
            <person name="Pillus L."/>
            <person name="Sternglanz R."/>
        </authorList>
    </citation>
    <scope>FUNCTION</scope>
    <scope>CATALYTIC ACTIVITY</scope>
    <source>
        <strain>K12 / MG1655 / ATCC 47076</strain>
    </source>
</reference>
<reference key="6">
    <citation type="journal article" date="2007" name="Proteomics">
        <title>From the genome sequence to the proteome and back: evaluation of E. coli genome annotation with a 2-D gel-based proteomics approach.</title>
        <authorList>
            <person name="Maillet I."/>
            <person name="Berndt P."/>
            <person name="Malo C."/>
            <person name="Rodriguez S."/>
            <person name="Brunisholz R.A."/>
            <person name="Pragai Z."/>
            <person name="Arnold S."/>
            <person name="Langen H."/>
            <person name="Wyss M."/>
        </authorList>
    </citation>
    <scope>DISCUSSION OF START SITE</scope>
    <source>
        <strain>K12 / JM109 / ATCC 53323</strain>
    </source>
</reference>
<reference key="7">
    <citation type="journal article" date="2013" name="Mol. Cell. Proteomics">
        <title>Identification of lysine succinylation substrates and the succinylation regulatory enzyme CobB in E. coli.</title>
        <authorList>
            <person name="Colak G."/>
            <person name="Xie Z."/>
            <person name="Zhu A.Y."/>
            <person name="Dai L."/>
            <person name="Lu Z."/>
            <person name="Zhang Y."/>
            <person name="Wan X."/>
            <person name="Chen Y."/>
            <person name="Cha Y.H."/>
            <person name="Lin H."/>
            <person name="Zhao Y."/>
            <person name="Tan M."/>
        </authorList>
    </citation>
    <scope>FUNCTION AS A DEACETYLASE AND A DESUCCINYLASE</scope>
    <scope>CATALYTIC ACTIVITY</scope>
    <scope>BIOPHYSICOCHEMICAL PROPERTIES</scope>
    <scope>DOMAIN</scope>
    <scope>MUTAGENESIS OF TYR-92 AND ARG-95</scope>
</reference>
<reference key="8">
    <citation type="journal article" date="2018" name="Genes (Basel)">
        <title>Lysine Acetylation Regulates Alanyl-tRNA Synthetase Activity in Escherichia coli.</title>
        <authorList>
            <person name="Umehara T."/>
            <person name="Kosono S."/>
            <person name="Soell D."/>
            <person name="Tamura K."/>
        </authorList>
    </citation>
    <scope>FUNCTION AS A PROTEIN DEACETYLASE</scope>
    <scope>CATALYTIC ACTIVITY</scope>
    <scope>ACTIVITY REGULATION</scope>
    <scope>ALTERNATIVE PROMOTER USAGE (ISOFORMS COBB-LONG AND COBB-SHORT)</scope>
    <scope>DISRUPTION PHENOTYPE</scope>
    <source>
        <strain>K12 / DH10B</strain>
    </source>
</reference>
<reference evidence="14" key="9">
    <citation type="journal article" date="2004" name="J. Mol. Biol.">
        <title>Structure and substrate binding properties of cobB, a Sir2 homolog protein deacetylase from Escherichia coli.</title>
        <authorList>
            <person name="Zhao K."/>
            <person name="Chai X."/>
            <person name="Marmorstein R."/>
        </authorList>
    </citation>
    <scope>X-RAY CRYSTALLOGRAPHY (1.96 ANGSTROMS) OF 40-274 IN COMPLEX WITH PEPTIDE SUBSTRATE AND ZINC</scope>
    <scope>CATALYTIC ACTIVITY</scope>
    <scope>FUNCTION</scope>
    <scope>SUBSTRATE</scope>
    <scope>INTERACTION WITH ACETYL-COA SYNTHETASE</scope>
    <scope>COFACTOR</scope>
</reference>
<reference key="10">
    <citation type="journal article" date="2019" name="Sci. Adv.">
        <title>Protein lysine de-2-hydroxyisobutyrylation by CobB in prokaryotes.</title>
        <authorList>
            <person name="Dong H."/>
            <person name="Zhai G."/>
            <person name="Chen C."/>
            <person name="Bai X."/>
            <person name="Tian S."/>
            <person name="Hu D."/>
            <person name="Fan E."/>
            <person name="Zhang K."/>
        </authorList>
    </citation>
    <scope>FUNCTION</scope>
    <source>
        <strain>K12 / MG1655 / ATCC 47076</strain>
    </source>
</reference>
<feature type="chain" id="PRO_0000110312" description="NAD-dependent protein deacylase" evidence="12">
    <location>
        <begin position="1"/>
        <end position="279"/>
    </location>
</feature>
<feature type="domain" description="Deacetylase sirtuin-type" evidence="3">
    <location>
        <begin position="20"/>
        <end position="272"/>
    </location>
</feature>
<feature type="active site" description="Proton acceptor" evidence="2">
    <location>
        <position position="147"/>
    </location>
</feature>
<feature type="binding site" evidence="2">
    <location>
        <begin position="48"/>
        <end position="67"/>
    </location>
    <ligand>
        <name>NAD(+)</name>
        <dbReference type="ChEBI" id="CHEBI:57540"/>
    </ligand>
</feature>
<feature type="binding site" evidence="2 7">
    <location>
        <position position="92"/>
    </location>
    <ligand>
        <name>substrate</name>
    </ligand>
</feature>
<feature type="binding site" evidence="2 7">
    <location>
        <position position="95"/>
    </location>
    <ligand>
        <name>substrate</name>
    </ligand>
</feature>
<feature type="binding site" evidence="2">
    <location>
        <begin position="129"/>
        <end position="132"/>
    </location>
    <ligand>
        <name>NAD(+)</name>
        <dbReference type="ChEBI" id="CHEBI:57540"/>
    </ligand>
</feature>
<feature type="binding site" evidence="2 6">
    <location>
        <position position="155"/>
    </location>
    <ligand>
        <name>Zn(2+)</name>
        <dbReference type="ChEBI" id="CHEBI:29105"/>
    </ligand>
</feature>
<feature type="binding site" evidence="2 6">
    <location>
        <position position="174"/>
    </location>
    <ligand>
        <name>Zn(2+)</name>
        <dbReference type="ChEBI" id="CHEBI:29105"/>
    </ligand>
</feature>
<feature type="binding site" evidence="2">
    <location>
        <begin position="214"/>
        <end position="216"/>
    </location>
    <ligand>
        <name>NAD(+)</name>
        <dbReference type="ChEBI" id="CHEBI:57540"/>
    </ligand>
</feature>
<feature type="binding site" evidence="2">
    <location>
        <begin position="240"/>
        <end position="242"/>
    </location>
    <ligand>
        <name>NAD(+)</name>
        <dbReference type="ChEBI" id="CHEBI:57540"/>
    </ligand>
</feature>
<feature type="binding site" evidence="2">
    <location>
        <position position="258"/>
    </location>
    <ligand>
        <name>NAD(+)</name>
        <dbReference type="ChEBI" id="CHEBI:57540"/>
    </ligand>
</feature>
<feature type="splice variant" id="VSP_058458" description="In isoform CobB-Short." evidence="12">
    <location>
        <begin position="1"/>
        <end position="37"/>
    </location>
</feature>
<feature type="mutagenesis site" description="42-fold decrease in desuccinylase activity. 3-fold decrease in deacetylase activity." evidence="7">
    <original>Y</original>
    <variation>F</variation>
    <location>
        <position position="92"/>
    </location>
</feature>
<feature type="mutagenesis site" description="100-fold decrease in desuccinylase activity. 3-fold decrease in deacetylase activity." evidence="7">
    <original>R</original>
    <variation>M</variation>
    <location>
        <position position="95"/>
    </location>
</feature>
<feature type="strand" evidence="15">
    <location>
        <begin position="43"/>
        <end position="47"/>
    </location>
</feature>
<feature type="helix" evidence="15">
    <location>
        <begin position="49"/>
        <end position="55"/>
    </location>
</feature>
<feature type="turn" evidence="15">
    <location>
        <begin position="62"/>
        <end position="64"/>
    </location>
</feature>
<feature type="helix" evidence="15">
    <location>
        <begin position="72"/>
        <end position="75"/>
    </location>
</feature>
<feature type="helix" evidence="15">
    <location>
        <begin position="78"/>
        <end position="83"/>
    </location>
</feature>
<feature type="helix" evidence="15">
    <location>
        <begin position="85"/>
        <end position="99"/>
    </location>
</feature>
<feature type="helix" evidence="15">
    <location>
        <begin position="108"/>
        <end position="120"/>
    </location>
</feature>
<feature type="helix" evidence="15">
    <location>
        <begin position="121"/>
        <end position="123"/>
    </location>
</feature>
<feature type="strand" evidence="15">
    <location>
        <begin position="124"/>
        <end position="129"/>
    </location>
</feature>
<feature type="helix" evidence="15">
    <location>
        <begin position="134"/>
        <end position="138"/>
    </location>
</feature>
<feature type="strand" evidence="15">
    <location>
        <begin position="148"/>
        <end position="155"/>
    </location>
</feature>
<feature type="turn" evidence="15">
    <location>
        <begin position="156"/>
        <end position="158"/>
    </location>
</feature>
<feature type="strand" evidence="15">
    <location>
        <begin position="161"/>
        <end position="163"/>
    </location>
</feature>
<feature type="strand" evidence="15">
    <location>
        <begin position="175"/>
        <end position="179"/>
    </location>
</feature>
<feature type="strand" evidence="15">
    <location>
        <begin position="182"/>
        <end position="187"/>
    </location>
</feature>
<feature type="helix" evidence="15">
    <location>
        <begin position="197"/>
        <end position="206"/>
    </location>
</feature>
<feature type="strand" evidence="15">
    <location>
        <begin position="208"/>
        <end position="214"/>
    </location>
</feature>
<feature type="helix" evidence="15">
    <location>
        <begin position="222"/>
        <end position="224"/>
    </location>
</feature>
<feature type="helix" evidence="15">
    <location>
        <begin position="225"/>
        <end position="231"/>
    </location>
</feature>
<feature type="strand" evidence="15">
    <location>
        <begin position="235"/>
        <end position="242"/>
    </location>
</feature>
<feature type="helix" evidence="15">
    <location>
        <begin position="247"/>
        <end position="249"/>
    </location>
</feature>
<feature type="strand" evidence="15">
    <location>
        <begin position="251"/>
        <end position="256"/>
    </location>
</feature>
<feature type="helix" evidence="15">
    <location>
        <begin position="258"/>
        <end position="273"/>
    </location>
</feature>
<dbReference type="EC" id="2.3.1.286" evidence="2 12"/>
<dbReference type="EMBL" id="U00096">
    <property type="protein sequence ID" value="AAC74204.3"/>
    <property type="molecule type" value="Genomic_DNA"/>
</dbReference>
<dbReference type="EMBL" id="U00096">
    <property type="protein sequence ID" value="QNV50513.1"/>
    <property type="molecule type" value="Genomic_DNA"/>
</dbReference>
<dbReference type="EMBL" id="AP009048">
    <property type="protein sequence ID" value="BAA35940.1"/>
    <property type="molecule type" value="Genomic_DNA"/>
</dbReference>
<dbReference type="PIR" id="E64856">
    <property type="entry name" value="E64856"/>
</dbReference>
<dbReference type="RefSeq" id="NP_415638.2">
    <property type="nucleotide sequence ID" value="NC_000913.3"/>
</dbReference>
<dbReference type="RefSeq" id="WP_000952737.1">
    <property type="nucleotide sequence ID" value="NZ_LN832404.1"/>
</dbReference>
<dbReference type="PDB" id="1S5P">
    <property type="method" value="X-ray"/>
    <property type="resolution" value="1.96 A"/>
    <property type="chains" value="A=40-274"/>
</dbReference>
<dbReference type="PDB" id="6RXJ">
    <property type="method" value="X-ray"/>
    <property type="resolution" value="1.60 A"/>
    <property type="chains" value="A/B=40-254"/>
</dbReference>
<dbReference type="PDB" id="6RXK">
    <property type="method" value="X-ray"/>
    <property type="resolution" value="1.35 A"/>
    <property type="chains" value="A=40-279"/>
</dbReference>
<dbReference type="PDB" id="6RXL">
    <property type="method" value="X-ray"/>
    <property type="resolution" value="2.30 A"/>
    <property type="chains" value="A=40-279"/>
</dbReference>
<dbReference type="PDB" id="6RXM">
    <property type="method" value="X-ray"/>
    <property type="resolution" value="1.92 A"/>
    <property type="chains" value="A/B/C/D/E/F=40-279"/>
</dbReference>
<dbReference type="PDB" id="6RXO">
    <property type="method" value="X-ray"/>
    <property type="resolution" value="1.95 A"/>
    <property type="chains" value="A/B=40-279"/>
</dbReference>
<dbReference type="PDB" id="6RXP">
    <property type="method" value="X-ray"/>
    <property type="resolution" value="1.80 A"/>
    <property type="chains" value="A/B=40-279"/>
</dbReference>
<dbReference type="PDB" id="6RXQ">
    <property type="method" value="X-ray"/>
    <property type="resolution" value="1.70 A"/>
    <property type="chains" value="A/B/C/D=40-279"/>
</dbReference>
<dbReference type="PDB" id="6RXR">
    <property type="method" value="X-ray"/>
    <property type="resolution" value="1.70 A"/>
    <property type="chains" value="A/B/C/D=40-279"/>
</dbReference>
<dbReference type="PDB" id="6RXS">
    <property type="method" value="X-ray"/>
    <property type="resolution" value="1.60 A"/>
    <property type="chains" value="A=40-279"/>
</dbReference>
<dbReference type="PDBsum" id="1S5P"/>
<dbReference type="PDBsum" id="6RXJ"/>
<dbReference type="PDBsum" id="6RXK"/>
<dbReference type="PDBsum" id="6RXL"/>
<dbReference type="PDBsum" id="6RXM"/>
<dbReference type="PDBsum" id="6RXO"/>
<dbReference type="PDBsum" id="6RXP"/>
<dbReference type="PDBsum" id="6RXQ"/>
<dbReference type="PDBsum" id="6RXR"/>
<dbReference type="PDBsum" id="6RXS"/>
<dbReference type="SMR" id="P75960"/>
<dbReference type="BioGRID" id="4260089">
    <property type="interactions" value="31"/>
</dbReference>
<dbReference type="BioGRID" id="850059">
    <property type="interactions" value="2"/>
</dbReference>
<dbReference type="DIP" id="DIP-9301N"/>
<dbReference type="FunCoup" id="P75960">
    <property type="interactions" value="621"/>
</dbReference>
<dbReference type="IntAct" id="P75960">
    <property type="interactions" value="19"/>
</dbReference>
<dbReference type="STRING" id="511145.b1120"/>
<dbReference type="jPOST" id="P75960"/>
<dbReference type="PaxDb" id="511145-b1120"/>
<dbReference type="EnsemblBacteria" id="AAC74204">
    <property type="protein sequence ID" value="AAC74204"/>
    <property type="gene ID" value="b1120"/>
</dbReference>
<dbReference type="GeneID" id="75203706"/>
<dbReference type="GeneID" id="945687"/>
<dbReference type="KEGG" id="ecj:JW1106"/>
<dbReference type="KEGG" id="eco:b1120"/>
<dbReference type="KEGG" id="ecoc:C3026_06745"/>
<dbReference type="PATRIC" id="fig|1411691.4.peg.1147"/>
<dbReference type="EchoBASE" id="EB3217"/>
<dbReference type="eggNOG" id="COG0846">
    <property type="taxonomic scope" value="Bacteria"/>
</dbReference>
<dbReference type="HOGENOM" id="CLU_023643_3_1_6"/>
<dbReference type="InParanoid" id="P75960"/>
<dbReference type="OMA" id="LIHMHGE"/>
<dbReference type="OrthoDB" id="9800582at2"/>
<dbReference type="PhylomeDB" id="P75960"/>
<dbReference type="BRENDA" id="2.3.1.286">
    <property type="organism ID" value="2026"/>
</dbReference>
<dbReference type="BRENDA" id="2.3.1.B43">
    <property type="organism ID" value="2026"/>
</dbReference>
<dbReference type="EvolutionaryTrace" id="P75960"/>
<dbReference type="PRO" id="PR:P75960"/>
<dbReference type="Proteomes" id="UP000000625">
    <property type="component" value="Chromosome"/>
</dbReference>
<dbReference type="GO" id="GO:0005737">
    <property type="term" value="C:cytoplasm"/>
    <property type="evidence" value="ECO:0007669"/>
    <property type="project" value="UniProtKB-SubCell"/>
</dbReference>
<dbReference type="GO" id="GO:0035438">
    <property type="term" value="F:cyclic-di-GMP binding"/>
    <property type="evidence" value="ECO:0000314"/>
    <property type="project" value="EcoCyc"/>
</dbReference>
<dbReference type="GO" id="GO:0017136">
    <property type="term" value="F:histone deacetylase activity, NAD-dependent"/>
    <property type="evidence" value="ECO:0000318"/>
    <property type="project" value="GO_Central"/>
</dbReference>
<dbReference type="GO" id="GO:0061690">
    <property type="term" value="F:lipoamidase activity"/>
    <property type="evidence" value="ECO:0000314"/>
    <property type="project" value="EcoCyc"/>
</dbReference>
<dbReference type="GO" id="GO:0070403">
    <property type="term" value="F:NAD+ binding"/>
    <property type="evidence" value="ECO:0000318"/>
    <property type="project" value="GO_Central"/>
</dbReference>
<dbReference type="GO" id="GO:0003950">
    <property type="term" value="F:NAD+ poly-ADP-ribosyltransferase activity"/>
    <property type="evidence" value="ECO:0000314"/>
    <property type="project" value="GO_Central"/>
</dbReference>
<dbReference type="GO" id="GO:0160013">
    <property type="term" value="F:NAD-dependent protein de-2-hydroxyisobutyrylase activity"/>
    <property type="evidence" value="ECO:0007669"/>
    <property type="project" value="RHEA"/>
</dbReference>
<dbReference type="GO" id="GO:0034979">
    <property type="term" value="F:NAD-dependent protein lysine deacetylase activity"/>
    <property type="evidence" value="ECO:0000314"/>
    <property type="project" value="EcoCyc"/>
</dbReference>
<dbReference type="GO" id="GO:0042803">
    <property type="term" value="F:protein homodimerization activity"/>
    <property type="evidence" value="ECO:0000314"/>
    <property type="project" value="EcoCyc"/>
</dbReference>
<dbReference type="GO" id="GO:0036054">
    <property type="term" value="F:protein-malonyllysine demalonylase activity"/>
    <property type="evidence" value="ECO:0007669"/>
    <property type="project" value="InterPro"/>
</dbReference>
<dbReference type="GO" id="GO:0036055">
    <property type="term" value="F:protein-succinyllysine desuccinylase activity"/>
    <property type="evidence" value="ECO:0000314"/>
    <property type="project" value="EcoCyc"/>
</dbReference>
<dbReference type="GO" id="GO:0008270">
    <property type="term" value="F:zinc ion binding"/>
    <property type="evidence" value="ECO:0007669"/>
    <property type="project" value="UniProtKB-UniRule"/>
</dbReference>
<dbReference type="GO" id="GO:0006935">
    <property type="term" value="P:chemotaxis"/>
    <property type="evidence" value="ECO:0000315"/>
    <property type="project" value="EcoCyc"/>
</dbReference>
<dbReference type="GO" id="GO:0051607">
    <property type="term" value="P:defense response to virus"/>
    <property type="evidence" value="ECO:0000315"/>
    <property type="project" value="EcoCyc"/>
</dbReference>
<dbReference type="CDD" id="cd01412">
    <property type="entry name" value="SIRT5_Af1_CobB"/>
    <property type="match status" value="1"/>
</dbReference>
<dbReference type="Gene3D" id="3.30.1600.10">
    <property type="entry name" value="SIR2/SIRT2 'Small Domain"/>
    <property type="match status" value="1"/>
</dbReference>
<dbReference type="Gene3D" id="3.40.50.1220">
    <property type="entry name" value="TPP-binding domain"/>
    <property type="match status" value="1"/>
</dbReference>
<dbReference type="HAMAP" id="MF_01121">
    <property type="entry name" value="Sirtuin_ClassIII"/>
    <property type="match status" value="1"/>
</dbReference>
<dbReference type="InterPro" id="IPR029035">
    <property type="entry name" value="DHS-like_NAD/FAD-binding_dom"/>
</dbReference>
<dbReference type="InterPro" id="IPR050134">
    <property type="entry name" value="NAD-dep_sirtuin_deacylases"/>
</dbReference>
<dbReference type="InterPro" id="IPR003000">
    <property type="entry name" value="Sirtuin"/>
</dbReference>
<dbReference type="InterPro" id="IPR026591">
    <property type="entry name" value="Sirtuin_cat_small_dom_sf"/>
</dbReference>
<dbReference type="InterPro" id="IPR027546">
    <property type="entry name" value="Sirtuin_class_III"/>
</dbReference>
<dbReference type="InterPro" id="IPR026590">
    <property type="entry name" value="Ssirtuin_cat_dom"/>
</dbReference>
<dbReference type="NCBIfam" id="NF001755">
    <property type="entry name" value="PRK00481.1-5"/>
    <property type="match status" value="1"/>
</dbReference>
<dbReference type="PANTHER" id="PTHR11085:SF4">
    <property type="entry name" value="NAD-DEPENDENT PROTEIN DEACYLASE"/>
    <property type="match status" value="1"/>
</dbReference>
<dbReference type="PANTHER" id="PTHR11085">
    <property type="entry name" value="NAD-DEPENDENT PROTEIN DEACYLASE SIRTUIN-5, MITOCHONDRIAL-RELATED"/>
    <property type="match status" value="1"/>
</dbReference>
<dbReference type="Pfam" id="PF02146">
    <property type="entry name" value="SIR2"/>
    <property type="match status" value="1"/>
</dbReference>
<dbReference type="SUPFAM" id="SSF52467">
    <property type="entry name" value="DHS-like NAD/FAD-binding domain"/>
    <property type="match status" value="1"/>
</dbReference>
<dbReference type="PROSITE" id="PS50305">
    <property type="entry name" value="SIRTUIN"/>
    <property type="match status" value="1"/>
</dbReference>
<keyword id="KW-0002">3D-structure</keyword>
<keyword id="KW-0877">Alternative promoter usage</keyword>
<keyword id="KW-0963">Cytoplasm</keyword>
<keyword id="KW-0479">Metal-binding</keyword>
<keyword id="KW-0520">NAD</keyword>
<keyword id="KW-1185">Reference proteome</keyword>
<keyword id="KW-0808">Transferase</keyword>
<keyword id="KW-0862">Zinc</keyword>
<proteinExistence type="evidence at protein level"/>
<sequence>MLSRRGHRLSRFRKNKRRLRERLRQRIFFRDKVVPEAMEKPRVLVLTGAGISAESGIRTFRAADGLWEEHRVEDVATPEGFDRDPELVQAFYNARRRQLQQPEIQPNAAHLALAKLQDALGDRFLLVTQNIDNLHERAGNTNVIHMHGELLKVRCSQSGQVLDWTGDVTPEDKCHCCQFPAPLRPHVVWFGEMPLGMDEIYMALSMADIFIAIGTSGHVYPAAGFVHEAKLHGAHTVELNLEPSQVGNEFAEKYYGPASQVVPEFVEKLLKGLKAGSIA</sequence>
<organism>
    <name type="scientific">Escherichia coli (strain K12)</name>
    <dbReference type="NCBI Taxonomy" id="83333"/>
    <lineage>
        <taxon>Bacteria</taxon>
        <taxon>Pseudomonadati</taxon>
        <taxon>Pseudomonadota</taxon>
        <taxon>Gammaproteobacteria</taxon>
        <taxon>Enterobacterales</taxon>
        <taxon>Enterobacteriaceae</taxon>
        <taxon>Escherichia</taxon>
    </lineage>
</organism>
<protein>
    <recommendedName>
        <fullName evidence="2">NAD-dependent protein deacylase</fullName>
        <ecNumber evidence="2 12">2.3.1.286</ecNumber>
    </recommendedName>
    <alternativeName>
        <fullName evidence="2">Regulatory protein SIR2 homolog</fullName>
    </alternativeName>
</protein>